<evidence type="ECO:0000255" key="1">
    <source>
        <dbReference type="HAMAP-Rule" id="MF_01571"/>
    </source>
</evidence>
<reference key="1">
    <citation type="submission" date="2006-12" db="EMBL/GenBank/DDBJ databases">
        <title>Complete sequence of Chlorobium phaeobacteroides DSM 266.</title>
        <authorList>
            <consortium name="US DOE Joint Genome Institute"/>
            <person name="Copeland A."/>
            <person name="Lucas S."/>
            <person name="Lapidus A."/>
            <person name="Barry K."/>
            <person name="Detter J.C."/>
            <person name="Glavina del Rio T."/>
            <person name="Hammon N."/>
            <person name="Israni S."/>
            <person name="Pitluck S."/>
            <person name="Goltsman E."/>
            <person name="Schmutz J."/>
            <person name="Larimer F."/>
            <person name="Land M."/>
            <person name="Hauser L."/>
            <person name="Mikhailova N."/>
            <person name="Li T."/>
            <person name="Overmann J."/>
            <person name="Bryant D.A."/>
            <person name="Richardson P."/>
        </authorList>
    </citation>
    <scope>NUCLEOTIDE SEQUENCE [LARGE SCALE GENOMIC DNA]</scope>
    <source>
        <strain>DSM 266 / SMG 266 / 2430</strain>
    </source>
</reference>
<organism>
    <name type="scientific">Chlorobium phaeobacteroides (strain DSM 266 / SMG 266 / 2430)</name>
    <dbReference type="NCBI Taxonomy" id="290317"/>
    <lineage>
        <taxon>Bacteria</taxon>
        <taxon>Pseudomonadati</taxon>
        <taxon>Chlorobiota</taxon>
        <taxon>Chlorobiia</taxon>
        <taxon>Chlorobiales</taxon>
        <taxon>Chlorobiaceae</taxon>
        <taxon>Chlorobium/Pelodictyon group</taxon>
        <taxon>Chlorobium</taxon>
    </lineage>
</organism>
<feature type="chain" id="PRO_0000288405" description="Proline--tRNA ligase">
    <location>
        <begin position="1"/>
        <end position="481"/>
    </location>
</feature>
<accession>A1BHL6</accession>
<sequence length="481" mass="54415">MAEKITTRSADYSQWYIDLVRSAKLADYSDVRGCMVIRPNGYAIWEKMQTALDRMFKETGHVNAYFPLFIPESFIAKEAEHIEGFAPECAVVTHGGGEELAEKLYVRPTSETIIWSSYKKWIQSYRDLPILINQWANVVRWEMRTRLFLRTTEFLWQEGHTAHATPEESQEEVVRMINVYKTFAENYMALPVIIGKKTDSEKFAGAVDTWCIEAMMQDSKALQAGTSHNLGQNFAKAFDCQFQTRDGKLDYVWATSWGVSTRLIGALIMAHSDDRGLVLPPKLATRQVVIIPILKGDKAAVCEKAHAISRTLSANGIPAFVDDSEQNSPGWKFAEYELQGIPLRIELGPRDIQNGTCIVARRDTLEKTELALDDTLSVSISEILNAIQQNLFDRALEFRNEHTFEASSYSEFREMVENGFVIAHWDGTAETEAKIKEETKATIRVLPEEPDYISRYAMHEAGTCIYSGNPAAQKAVFAKAY</sequence>
<proteinExistence type="inferred from homology"/>
<gene>
    <name evidence="1" type="primary">proS</name>
    <name type="ordered locus">Cpha266_1877</name>
</gene>
<dbReference type="EC" id="6.1.1.15" evidence="1"/>
<dbReference type="EMBL" id="CP000492">
    <property type="protein sequence ID" value="ABL65893.1"/>
    <property type="molecule type" value="Genomic_DNA"/>
</dbReference>
<dbReference type="RefSeq" id="WP_011745700.1">
    <property type="nucleotide sequence ID" value="NC_008639.1"/>
</dbReference>
<dbReference type="SMR" id="A1BHL6"/>
<dbReference type="STRING" id="290317.Cpha266_1877"/>
<dbReference type="KEGG" id="cph:Cpha266_1877"/>
<dbReference type="eggNOG" id="COG0442">
    <property type="taxonomic scope" value="Bacteria"/>
</dbReference>
<dbReference type="HOGENOM" id="CLU_001882_4_2_10"/>
<dbReference type="OrthoDB" id="9809052at2"/>
<dbReference type="Proteomes" id="UP000008701">
    <property type="component" value="Chromosome"/>
</dbReference>
<dbReference type="GO" id="GO:0017101">
    <property type="term" value="C:aminoacyl-tRNA synthetase multienzyme complex"/>
    <property type="evidence" value="ECO:0007669"/>
    <property type="project" value="TreeGrafter"/>
</dbReference>
<dbReference type="GO" id="GO:0005737">
    <property type="term" value="C:cytoplasm"/>
    <property type="evidence" value="ECO:0007669"/>
    <property type="project" value="UniProtKB-SubCell"/>
</dbReference>
<dbReference type="GO" id="GO:0005524">
    <property type="term" value="F:ATP binding"/>
    <property type="evidence" value="ECO:0007669"/>
    <property type="project" value="UniProtKB-UniRule"/>
</dbReference>
<dbReference type="GO" id="GO:0004827">
    <property type="term" value="F:proline-tRNA ligase activity"/>
    <property type="evidence" value="ECO:0007669"/>
    <property type="project" value="UniProtKB-UniRule"/>
</dbReference>
<dbReference type="GO" id="GO:0006433">
    <property type="term" value="P:prolyl-tRNA aminoacylation"/>
    <property type="evidence" value="ECO:0007669"/>
    <property type="project" value="UniProtKB-UniRule"/>
</dbReference>
<dbReference type="CDD" id="cd00862">
    <property type="entry name" value="ProRS_anticodon_zinc"/>
    <property type="match status" value="1"/>
</dbReference>
<dbReference type="CDD" id="cd00778">
    <property type="entry name" value="ProRS_core_arch_euk"/>
    <property type="match status" value="1"/>
</dbReference>
<dbReference type="FunFam" id="3.30.930.10:FF:000023">
    <property type="entry name" value="Proline--tRNA ligase"/>
    <property type="match status" value="1"/>
</dbReference>
<dbReference type="Gene3D" id="3.40.50.800">
    <property type="entry name" value="Anticodon-binding domain"/>
    <property type="match status" value="1"/>
</dbReference>
<dbReference type="Gene3D" id="3.30.930.10">
    <property type="entry name" value="Bira Bifunctional Protein, Domain 2"/>
    <property type="match status" value="1"/>
</dbReference>
<dbReference type="Gene3D" id="3.30.110.30">
    <property type="entry name" value="C-terminal domain of ProRS"/>
    <property type="match status" value="1"/>
</dbReference>
<dbReference type="HAMAP" id="MF_01571">
    <property type="entry name" value="Pro_tRNA_synth_type3"/>
    <property type="match status" value="1"/>
</dbReference>
<dbReference type="InterPro" id="IPR002314">
    <property type="entry name" value="aa-tRNA-synt_IIb"/>
</dbReference>
<dbReference type="InterPro" id="IPR006195">
    <property type="entry name" value="aa-tRNA-synth_II"/>
</dbReference>
<dbReference type="InterPro" id="IPR045864">
    <property type="entry name" value="aa-tRNA-synth_II/BPL/LPL"/>
</dbReference>
<dbReference type="InterPro" id="IPR004154">
    <property type="entry name" value="Anticodon-bd"/>
</dbReference>
<dbReference type="InterPro" id="IPR036621">
    <property type="entry name" value="Anticodon-bd_dom_sf"/>
</dbReference>
<dbReference type="InterPro" id="IPR002316">
    <property type="entry name" value="Pro-tRNA-ligase_IIa"/>
</dbReference>
<dbReference type="InterPro" id="IPR004499">
    <property type="entry name" value="Pro-tRNA-ligase_IIa_arc-type"/>
</dbReference>
<dbReference type="InterPro" id="IPR016061">
    <property type="entry name" value="Pro-tRNA_ligase_II_C"/>
</dbReference>
<dbReference type="InterPro" id="IPR017449">
    <property type="entry name" value="Pro-tRNA_synth_II"/>
</dbReference>
<dbReference type="InterPro" id="IPR033721">
    <property type="entry name" value="ProRS_core_arch_euk"/>
</dbReference>
<dbReference type="NCBIfam" id="TIGR00408">
    <property type="entry name" value="proS_fam_I"/>
    <property type="match status" value="1"/>
</dbReference>
<dbReference type="PANTHER" id="PTHR43382:SF2">
    <property type="entry name" value="BIFUNCTIONAL GLUTAMATE_PROLINE--TRNA LIGASE"/>
    <property type="match status" value="1"/>
</dbReference>
<dbReference type="PANTHER" id="PTHR43382">
    <property type="entry name" value="PROLYL-TRNA SYNTHETASE"/>
    <property type="match status" value="1"/>
</dbReference>
<dbReference type="Pfam" id="PF03129">
    <property type="entry name" value="HGTP_anticodon"/>
    <property type="match status" value="1"/>
</dbReference>
<dbReference type="Pfam" id="PF09180">
    <property type="entry name" value="ProRS-C_1"/>
    <property type="match status" value="1"/>
</dbReference>
<dbReference type="Pfam" id="PF00587">
    <property type="entry name" value="tRNA-synt_2b"/>
    <property type="match status" value="1"/>
</dbReference>
<dbReference type="PRINTS" id="PR01046">
    <property type="entry name" value="TRNASYNTHPRO"/>
</dbReference>
<dbReference type="SMART" id="SM00946">
    <property type="entry name" value="ProRS-C_1"/>
    <property type="match status" value="1"/>
</dbReference>
<dbReference type="SUPFAM" id="SSF64586">
    <property type="entry name" value="C-terminal domain of ProRS"/>
    <property type="match status" value="1"/>
</dbReference>
<dbReference type="SUPFAM" id="SSF52954">
    <property type="entry name" value="Class II aaRS ABD-related"/>
    <property type="match status" value="1"/>
</dbReference>
<dbReference type="SUPFAM" id="SSF55681">
    <property type="entry name" value="Class II aaRS and biotin synthetases"/>
    <property type="match status" value="1"/>
</dbReference>
<dbReference type="PROSITE" id="PS50862">
    <property type="entry name" value="AA_TRNA_LIGASE_II"/>
    <property type="match status" value="1"/>
</dbReference>
<keyword id="KW-0030">Aminoacyl-tRNA synthetase</keyword>
<keyword id="KW-0067">ATP-binding</keyword>
<keyword id="KW-0963">Cytoplasm</keyword>
<keyword id="KW-0436">Ligase</keyword>
<keyword id="KW-0547">Nucleotide-binding</keyword>
<keyword id="KW-0648">Protein biosynthesis</keyword>
<keyword id="KW-1185">Reference proteome</keyword>
<comment type="function">
    <text evidence="1">Catalyzes the attachment of proline to tRNA(Pro) in a two-step reaction: proline is first activated by ATP to form Pro-AMP and then transferred to the acceptor end of tRNA(Pro).</text>
</comment>
<comment type="catalytic activity">
    <reaction evidence="1">
        <text>tRNA(Pro) + L-proline + ATP = L-prolyl-tRNA(Pro) + AMP + diphosphate</text>
        <dbReference type="Rhea" id="RHEA:14305"/>
        <dbReference type="Rhea" id="RHEA-COMP:9700"/>
        <dbReference type="Rhea" id="RHEA-COMP:9702"/>
        <dbReference type="ChEBI" id="CHEBI:30616"/>
        <dbReference type="ChEBI" id="CHEBI:33019"/>
        <dbReference type="ChEBI" id="CHEBI:60039"/>
        <dbReference type="ChEBI" id="CHEBI:78442"/>
        <dbReference type="ChEBI" id="CHEBI:78532"/>
        <dbReference type="ChEBI" id="CHEBI:456215"/>
        <dbReference type="EC" id="6.1.1.15"/>
    </reaction>
</comment>
<comment type="subunit">
    <text evidence="1">Homodimer.</text>
</comment>
<comment type="subcellular location">
    <subcellularLocation>
        <location evidence="1">Cytoplasm</location>
    </subcellularLocation>
</comment>
<comment type="domain">
    <text evidence="1">Consists of three domains: the N-terminal catalytic domain, the anticodon-binding domain and the C-terminal extension.</text>
</comment>
<comment type="similarity">
    <text evidence="1">Belongs to the class-II aminoacyl-tRNA synthetase family. ProS type 3 subfamily.</text>
</comment>
<protein>
    <recommendedName>
        <fullName evidence="1">Proline--tRNA ligase</fullName>
        <ecNumber evidence="1">6.1.1.15</ecNumber>
    </recommendedName>
    <alternativeName>
        <fullName evidence="1">Prolyl-tRNA synthetase</fullName>
        <shortName evidence="1">ProRS</shortName>
    </alternativeName>
</protein>
<name>SYP_CHLPD</name>